<name>WHIA_CORGL</name>
<proteinExistence type="inferred from homology"/>
<accession>Q8NQ58</accession>
<accession>Q6M510</accession>
<feature type="chain" id="PRO_0000376474" description="Probable cell division protein WhiA">
    <location>
        <begin position="1"/>
        <end position="327"/>
    </location>
</feature>
<feature type="DNA-binding region" description="H-T-H motif" evidence="1">
    <location>
        <begin position="275"/>
        <end position="308"/>
    </location>
</feature>
<dbReference type="EMBL" id="BA000036">
    <property type="protein sequence ID" value="BAB98982.1"/>
    <property type="molecule type" value="Genomic_DNA"/>
</dbReference>
<dbReference type="EMBL" id="BX927152">
    <property type="protein sequence ID" value="CAF21597.1"/>
    <property type="molecule type" value="Genomic_DNA"/>
</dbReference>
<dbReference type="RefSeq" id="NP_600803.1">
    <property type="nucleotide sequence ID" value="NC_003450.3"/>
</dbReference>
<dbReference type="RefSeq" id="WP_003862248.1">
    <property type="nucleotide sequence ID" value="NC_006958.1"/>
</dbReference>
<dbReference type="SMR" id="Q8NQ58"/>
<dbReference type="STRING" id="196627.cg1792"/>
<dbReference type="GeneID" id="1019557"/>
<dbReference type="KEGG" id="cgb:cg1792"/>
<dbReference type="KEGG" id="cgl:Cgl1589"/>
<dbReference type="PATRIC" id="fig|196627.13.peg.1551"/>
<dbReference type="eggNOG" id="COG1481">
    <property type="taxonomic scope" value="Bacteria"/>
</dbReference>
<dbReference type="HOGENOM" id="CLU_053282_0_0_11"/>
<dbReference type="OrthoDB" id="5197218at2"/>
<dbReference type="BioCyc" id="CORYNE:G18NG-11174-MONOMER"/>
<dbReference type="Proteomes" id="UP000000582">
    <property type="component" value="Chromosome"/>
</dbReference>
<dbReference type="Proteomes" id="UP000001009">
    <property type="component" value="Chromosome"/>
</dbReference>
<dbReference type="GO" id="GO:0003677">
    <property type="term" value="F:DNA binding"/>
    <property type="evidence" value="ECO:0007669"/>
    <property type="project" value="UniProtKB-UniRule"/>
</dbReference>
<dbReference type="GO" id="GO:0051301">
    <property type="term" value="P:cell division"/>
    <property type="evidence" value="ECO:0007669"/>
    <property type="project" value="UniProtKB-UniRule"/>
</dbReference>
<dbReference type="GO" id="GO:0043937">
    <property type="term" value="P:regulation of sporulation"/>
    <property type="evidence" value="ECO:0007669"/>
    <property type="project" value="InterPro"/>
</dbReference>
<dbReference type="FunFam" id="3.10.28.10:FF:000001">
    <property type="entry name" value="Probable cell division protein WhiA"/>
    <property type="match status" value="1"/>
</dbReference>
<dbReference type="Gene3D" id="3.10.28.10">
    <property type="entry name" value="Homing endonucleases"/>
    <property type="match status" value="1"/>
</dbReference>
<dbReference type="HAMAP" id="MF_01420">
    <property type="entry name" value="HTH_type_WhiA"/>
    <property type="match status" value="1"/>
</dbReference>
<dbReference type="InterPro" id="IPR027434">
    <property type="entry name" value="Homing_endonucl"/>
</dbReference>
<dbReference type="InterPro" id="IPR018478">
    <property type="entry name" value="Sporu_reg_WhiA_N_dom"/>
</dbReference>
<dbReference type="InterPro" id="IPR003802">
    <property type="entry name" value="Sporulation_regulator_WhiA"/>
</dbReference>
<dbReference type="InterPro" id="IPR023054">
    <property type="entry name" value="Sporulation_regulator_WhiA_C"/>
</dbReference>
<dbReference type="InterPro" id="IPR039518">
    <property type="entry name" value="WhiA_LAGLIDADG_dom"/>
</dbReference>
<dbReference type="NCBIfam" id="TIGR00647">
    <property type="entry name" value="DNA_bind_WhiA"/>
    <property type="match status" value="1"/>
</dbReference>
<dbReference type="PANTHER" id="PTHR37307">
    <property type="entry name" value="CELL DIVISION PROTEIN WHIA-RELATED"/>
    <property type="match status" value="1"/>
</dbReference>
<dbReference type="PANTHER" id="PTHR37307:SF1">
    <property type="entry name" value="CELL DIVISION PROTEIN WHIA-RELATED"/>
    <property type="match status" value="1"/>
</dbReference>
<dbReference type="Pfam" id="PF02650">
    <property type="entry name" value="HTH_WhiA"/>
    <property type="match status" value="1"/>
</dbReference>
<dbReference type="Pfam" id="PF14527">
    <property type="entry name" value="LAGLIDADG_WhiA"/>
    <property type="match status" value="1"/>
</dbReference>
<dbReference type="Pfam" id="PF10298">
    <property type="entry name" value="WhiA_N"/>
    <property type="match status" value="1"/>
</dbReference>
<keyword id="KW-0131">Cell cycle</keyword>
<keyword id="KW-0132">Cell division</keyword>
<keyword id="KW-0238">DNA-binding</keyword>
<keyword id="KW-1185">Reference proteome</keyword>
<reference key="1">
    <citation type="journal article" date="2003" name="Appl. Microbiol. Biotechnol.">
        <title>The Corynebacterium glutamicum genome: features and impacts on biotechnological processes.</title>
        <authorList>
            <person name="Ikeda M."/>
            <person name="Nakagawa S."/>
        </authorList>
    </citation>
    <scope>NUCLEOTIDE SEQUENCE [LARGE SCALE GENOMIC DNA]</scope>
    <source>
        <strain>ATCC 13032 / DSM 20300 / JCM 1318 / BCRC 11384 / CCUG 27702 / LMG 3730 / NBRC 12168 / NCIMB 10025 / NRRL B-2784 / 534</strain>
    </source>
</reference>
<reference key="2">
    <citation type="journal article" date="2003" name="J. Biotechnol.">
        <title>The complete Corynebacterium glutamicum ATCC 13032 genome sequence and its impact on the production of L-aspartate-derived amino acids and vitamins.</title>
        <authorList>
            <person name="Kalinowski J."/>
            <person name="Bathe B."/>
            <person name="Bartels D."/>
            <person name="Bischoff N."/>
            <person name="Bott M."/>
            <person name="Burkovski A."/>
            <person name="Dusch N."/>
            <person name="Eggeling L."/>
            <person name="Eikmanns B.J."/>
            <person name="Gaigalat L."/>
            <person name="Goesmann A."/>
            <person name="Hartmann M."/>
            <person name="Huthmacher K."/>
            <person name="Kraemer R."/>
            <person name="Linke B."/>
            <person name="McHardy A.C."/>
            <person name="Meyer F."/>
            <person name="Moeckel B."/>
            <person name="Pfefferle W."/>
            <person name="Puehler A."/>
            <person name="Rey D.A."/>
            <person name="Rueckert C."/>
            <person name="Rupp O."/>
            <person name="Sahm H."/>
            <person name="Wendisch V.F."/>
            <person name="Wiegraebe I."/>
            <person name="Tauch A."/>
        </authorList>
    </citation>
    <scope>NUCLEOTIDE SEQUENCE [LARGE SCALE GENOMIC DNA]</scope>
    <source>
        <strain>ATCC 13032 / DSM 20300 / JCM 1318 / BCRC 11384 / CCUG 27702 / LMG 3730 / NBRC 12168 / NCIMB 10025 / NRRL B-2784 / 534</strain>
    </source>
</reference>
<comment type="function">
    <text evidence="1">Involved in cell division and chromosome segregation.</text>
</comment>
<comment type="similarity">
    <text evidence="1">Belongs to the WhiA family.</text>
</comment>
<protein>
    <recommendedName>
        <fullName evidence="1">Probable cell division protein WhiA</fullName>
    </recommendedName>
</protein>
<organism>
    <name type="scientific">Corynebacterium glutamicum (strain ATCC 13032 / DSM 20300 / JCM 1318 / BCRC 11384 / CCUG 27702 / LMG 3730 / NBRC 12168 / NCIMB 10025 / NRRL B-2784 / 534)</name>
    <dbReference type="NCBI Taxonomy" id="196627"/>
    <lineage>
        <taxon>Bacteria</taxon>
        <taxon>Bacillati</taxon>
        <taxon>Actinomycetota</taxon>
        <taxon>Actinomycetes</taxon>
        <taxon>Mycobacteriales</taxon>
        <taxon>Corynebacteriaceae</taxon>
        <taxon>Corynebacterium</taxon>
    </lineage>
</organism>
<gene>
    <name evidence="1" type="primary">whiA</name>
    <name type="ordered locus">Cgl1589</name>
    <name type="ordered locus">cg1792</name>
</gene>
<sequence length="327" mass="35618">MSLTSDIKQELAQVHVAKNSVRAAEVSAILRFAGEMQAVGGKLVIEANLDSMQVGMRLQEFIQGLYNSRVDVHTVNPTVSRKTPRYLVRIIDNADEIARRTGLVTRSGHVVKGLAPSVVSGTISDAEAAWRGAFLANGSLSDPGRSSSLEVLCPGQESALALVGCARRIGIAAKTKDSRGFDRVNVRDAEAIGALLTRMGAQKTRMLWEEKRIKRESRTPANRLANFDDANLRRSARAAVAAAARVERAMKILGDDVPEHLAEAGQLRVQHRQASLEELGRLADPQMTKDAVAGRIRRLLTMADKRAEDLKIPDTNSVVTEDLLEEI</sequence>
<evidence type="ECO:0000255" key="1">
    <source>
        <dbReference type="HAMAP-Rule" id="MF_01420"/>
    </source>
</evidence>